<evidence type="ECO:0000255" key="1">
    <source>
        <dbReference type="HAMAP-Rule" id="MF_02101"/>
    </source>
</evidence>
<protein>
    <recommendedName>
        <fullName evidence="1">1,4-dihydroxy-2-naphthoyl-CoA hydrolase</fullName>
        <shortName evidence="1">DHNA-CoA hydrolase</shortName>
        <ecNumber evidence="1">3.1.2.28</ecNumber>
    </recommendedName>
    <alternativeName>
        <fullName evidence="1">DHNA-CoA thioesterase</fullName>
    </alternativeName>
</protein>
<dbReference type="EC" id="3.1.2.28" evidence="1"/>
<dbReference type="EMBL" id="CP000825">
    <property type="protein sequence ID" value="ABV49810.1"/>
    <property type="molecule type" value="Genomic_DNA"/>
</dbReference>
<dbReference type="RefSeq" id="WP_012006980.1">
    <property type="nucleotide sequence ID" value="NC_009840.1"/>
</dbReference>
<dbReference type="SMR" id="A8G2H9"/>
<dbReference type="STRING" id="93060.P9215_01911"/>
<dbReference type="KEGG" id="pmh:P9215_01911"/>
<dbReference type="eggNOG" id="COG0824">
    <property type="taxonomic scope" value="Bacteria"/>
</dbReference>
<dbReference type="HOGENOM" id="CLU_101141_5_3_3"/>
<dbReference type="OrthoDB" id="9800856at2"/>
<dbReference type="UniPathway" id="UPA00995"/>
<dbReference type="UniPathway" id="UPA01057">
    <property type="reaction ID" value="UER01033"/>
</dbReference>
<dbReference type="Proteomes" id="UP000002014">
    <property type="component" value="Chromosome"/>
</dbReference>
<dbReference type="GO" id="GO:0061522">
    <property type="term" value="F:1,4-dihydroxy-2-naphthoyl-CoA thioesterase activity"/>
    <property type="evidence" value="ECO:0007669"/>
    <property type="project" value="UniProtKB-EC"/>
</dbReference>
<dbReference type="GO" id="GO:0047617">
    <property type="term" value="F:fatty acyl-CoA hydrolase activity"/>
    <property type="evidence" value="ECO:0007669"/>
    <property type="project" value="TreeGrafter"/>
</dbReference>
<dbReference type="GO" id="GO:0042372">
    <property type="term" value="P:phylloquinone biosynthetic process"/>
    <property type="evidence" value="ECO:0007669"/>
    <property type="project" value="UniProtKB-UniRule"/>
</dbReference>
<dbReference type="CDD" id="cd00586">
    <property type="entry name" value="4HBT"/>
    <property type="match status" value="1"/>
</dbReference>
<dbReference type="Gene3D" id="3.10.129.10">
    <property type="entry name" value="Hotdog Thioesterase"/>
    <property type="match status" value="1"/>
</dbReference>
<dbReference type="HAMAP" id="MF_02101">
    <property type="entry name" value="DHNA_CoA_hydrolase"/>
    <property type="match status" value="1"/>
</dbReference>
<dbReference type="InterPro" id="IPR050563">
    <property type="entry name" value="4-hydroxybenzoyl-CoA_TE"/>
</dbReference>
<dbReference type="InterPro" id="IPR022829">
    <property type="entry name" value="DHNA_CoA_hydrolase"/>
</dbReference>
<dbReference type="InterPro" id="IPR029069">
    <property type="entry name" value="HotDog_dom_sf"/>
</dbReference>
<dbReference type="PANTHER" id="PTHR31793">
    <property type="entry name" value="4-HYDROXYBENZOYL-COA THIOESTERASE FAMILY MEMBER"/>
    <property type="match status" value="1"/>
</dbReference>
<dbReference type="PANTHER" id="PTHR31793:SF27">
    <property type="entry name" value="NOVEL THIOESTERASE SUPERFAMILY DOMAIN AND SAPOSIN A-TYPE DOMAIN CONTAINING PROTEIN (0610012H03RIK)"/>
    <property type="match status" value="1"/>
</dbReference>
<dbReference type="Pfam" id="PF13279">
    <property type="entry name" value="4HBT_2"/>
    <property type="match status" value="1"/>
</dbReference>
<dbReference type="SUPFAM" id="SSF54637">
    <property type="entry name" value="Thioesterase/thiol ester dehydrase-isomerase"/>
    <property type="match status" value="1"/>
</dbReference>
<proteinExistence type="inferred from homology"/>
<keyword id="KW-0378">Hydrolase</keyword>
<accession>A8G2H9</accession>
<organism>
    <name type="scientific">Prochlorococcus marinus (strain MIT 9215)</name>
    <dbReference type="NCBI Taxonomy" id="93060"/>
    <lineage>
        <taxon>Bacteria</taxon>
        <taxon>Bacillati</taxon>
        <taxon>Cyanobacteriota</taxon>
        <taxon>Cyanophyceae</taxon>
        <taxon>Synechococcales</taxon>
        <taxon>Prochlorococcaceae</taxon>
        <taxon>Prochlorococcus</taxon>
    </lineage>
</organism>
<feature type="chain" id="PRO_0000377018" description="1,4-dihydroxy-2-naphthoyl-CoA hydrolase">
    <location>
        <begin position="1"/>
        <end position="150"/>
    </location>
</feature>
<feature type="active site" evidence="1">
    <location>
        <position position="19"/>
    </location>
</feature>
<sequence>MKPADWLILQRKVRFGDCDSAGVIHFHNLLKWSHEAWEESIEIYGIPYKDIFPDFSIRKSQIVFPIVNCEANFLAPIKIGDFLKVKIAPHKINTHLFQVNSFFIKNGNKVAEGKIIHCSLDIDSRNKIELPDQLERWIEASNVSTNLKEC</sequence>
<reference key="1">
    <citation type="journal article" date="2007" name="PLoS Genet.">
        <title>Patterns and implications of gene gain and loss in the evolution of Prochlorococcus.</title>
        <authorList>
            <person name="Kettler G.C."/>
            <person name="Martiny A.C."/>
            <person name="Huang K."/>
            <person name="Zucker J."/>
            <person name="Coleman M.L."/>
            <person name="Rodrigue S."/>
            <person name="Chen F."/>
            <person name="Lapidus A."/>
            <person name="Ferriera S."/>
            <person name="Johnson J."/>
            <person name="Steglich C."/>
            <person name="Church G.M."/>
            <person name="Richardson P."/>
            <person name="Chisholm S.W."/>
        </authorList>
    </citation>
    <scope>NUCLEOTIDE SEQUENCE [LARGE SCALE GENOMIC DNA]</scope>
    <source>
        <strain>MIT 9215</strain>
    </source>
</reference>
<gene>
    <name type="ordered locus">P9215_01911</name>
</gene>
<comment type="function">
    <text evidence="1">Catalyzes the hydrolysis of 1,4-dihydroxy-2-naphthoyl-CoA (DHNA-CoA) to 1,4-dihydroxy-2-naphthoate (DHNA), a reaction involved in phylloquinone (vitamin K1) biosynthesis.</text>
</comment>
<comment type="catalytic activity">
    <reaction evidence="1">
        <text>1,4-dihydroxy-2-naphthoyl-CoA + H2O = 1,4-dihydroxy-2-naphthoate + CoA + H(+)</text>
        <dbReference type="Rhea" id="RHEA:26309"/>
        <dbReference type="ChEBI" id="CHEBI:11173"/>
        <dbReference type="ChEBI" id="CHEBI:15377"/>
        <dbReference type="ChEBI" id="CHEBI:15378"/>
        <dbReference type="ChEBI" id="CHEBI:57287"/>
        <dbReference type="ChEBI" id="CHEBI:58897"/>
        <dbReference type="EC" id="3.1.2.28"/>
    </reaction>
</comment>
<comment type="pathway">
    <text evidence="1">Cofactor biosynthesis; phylloquinone biosynthesis.</text>
</comment>
<comment type="pathway">
    <text evidence="1">Quinol/quinone metabolism; 1,4-dihydroxy-2-naphthoate biosynthesis; 1,4-dihydroxy-2-naphthoate from chorismate: step 7/7.</text>
</comment>
<comment type="similarity">
    <text evidence="1">Belongs to the 4-hydroxybenzoyl-CoA thioesterase family. DHNA-CoA hydrolase subfamily.</text>
</comment>
<name>DNCH_PROM2</name>